<comment type="function">
    <text evidence="2">Probable catalytic subunit of the gamma-secretase complex, an endoprotease complex that catalyzes the intramembrane cleavage of integral membrane proteins such as Notch receptors and APP (amyloid-beta precursor protein). Requires the other members of the gamma-secretase complex to have a protease activity. May play a role in intracellular signaling and gene expression or in linking chromatin to the nuclear membrane. May function in the cytoplasmic partitioning of proteins. The holoprotein functions as a calcium-leak channel that allows the passive movement of calcium from endoplasmic reticulum to cytosol and is involved in calcium homeostasis. Is a regulator of mitochondrion-endoplasmic reticulum membrane tethering and modulates calcium ions shuttling between ER and mitochondria.</text>
</comment>
<comment type="subunit">
    <text evidence="1">Homodimer. Component of the gamma-secretase complex, a complex composed of a presenilin homodimer (PSEN1 or PSEN2), nicastrin (NCSTN), APH1 (APH1A or APH1B) and PEN2. Such minimal complex is sufficient for secretase activity, although other components may exist. Interacts with DOCK3. Interacts with HERPUD1, FLNA and FLNB (By similarity).</text>
</comment>
<comment type="subcellular location">
    <subcellularLocation>
        <location evidence="1">Endoplasmic reticulum membrane</location>
        <topology evidence="1">Multi-pass membrane protein</topology>
    </subcellularLocation>
    <subcellularLocation>
        <location evidence="1">Golgi apparatus membrane</location>
        <topology evidence="1">Multi-pass membrane protein</topology>
    </subcellularLocation>
</comment>
<comment type="domain">
    <text evidence="1">The PAL motif is required for normal active site conformation.</text>
</comment>
<comment type="PTM">
    <text evidence="1">Phosphorylated on serine residues.</text>
</comment>
<comment type="similarity">
    <text evidence="6">Belongs to the peptidase A22A family.</text>
</comment>
<gene>
    <name type="primary">PSEN2</name>
    <name type="synonym">PS2</name>
    <name type="synonym">PSNL2</name>
</gene>
<keyword id="KW-0256">Endoplasmic reticulum</keyword>
<keyword id="KW-0333">Golgi apparatus</keyword>
<keyword id="KW-0378">Hydrolase</keyword>
<keyword id="KW-0472">Membrane</keyword>
<keyword id="KW-0914">Notch signaling pathway</keyword>
<keyword id="KW-0908">Parkinsonism</keyword>
<keyword id="KW-0597">Phosphoprotein</keyword>
<keyword id="KW-0645">Protease</keyword>
<keyword id="KW-1185">Reference proteome</keyword>
<keyword id="KW-0812">Transmembrane</keyword>
<keyword id="KW-1133">Transmembrane helix</keyword>
<accession>P79801</accession>
<dbReference type="EC" id="3.4.23.-"/>
<dbReference type="EMBL" id="Y10140">
    <property type="protein sequence ID" value="CAA71228.1"/>
    <property type="molecule type" value="mRNA"/>
</dbReference>
<dbReference type="SMR" id="P79801"/>
<dbReference type="MEROPS" id="A22.002"/>
<dbReference type="Proteomes" id="UP000694394">
    <property type="component" value="Unplaced"/>
</dbReference>
<dbReference type="GO" id="GO:0005789">
    <property type="term" value="C:endoplasmic reticulum membrane"/>
    <property type="evidence" value="ECO:0007669"/>
    <property type="project" value="UniProtKB-SubCell"/>
</dbReference>
<dbReference type="GO" id="GO:0070765">
    <property type="term" value="C:gamma-secretase complex"/>
    <property type="evidence" value="ECO:0007669"/>
    <property type="project" value="TreeGrafter"/>
</dbReference>
<dbReference type="GO" id="GO:0000139">
    <property type="term" value="C:Golgi membrane"/>
    <property type="evidence" value="ECO:0007669"/>
    <property type="project" value="UniProtKB-SubCell"/>
</dbReference>
<dbReference type="GO" id="GO:0042500">
    <property type="term" value="F:aspartic endopeptidase activity, intramembrane cleaving"/>
    <property type="evidence" value="ECO:0007669"/>
    <property type="project" value="InterPro"/>
</dbReference>
<dbReference type="GO" id="GO:0034205">
    <property type="term" value="P:amyloid-beta formation"/>
    <property type="evidence" value="ECO:0007669"/>
    <property type="project" value="TreeGrafter"/>
</dbReference>
<dbReference type="GO" id="GO:0055074">
    <property type="term" value="P:calcium ion homeostasis"/>
    <property type="evidence" value="ECO:0007669"/>
    <property type="project" value="TreeGrafter"/>
</dbReference>
<dbReference type="GO" id="GO:0035556">
    <property type="term" value="P:intracellular signal transduction"/>
    <property type="evidence" value="ECO:0007669"/>
    <property type="project" value="InterPro"/>
</dbReference>
<dbReference type="GO" id="GO:0006509">
    <property type="term" value="P:membrane protein ectodomain proteolysis"/>
    <property type="evidence" value="ECO:0007669"/>
    <property type="project" value="TreeGrafter"/>
</dbReference>
<dbReference type="GO" id="GO:1990456">
    <property type="term" value="P:mitochondrion-endoplasmic reticulum membrane tethering"/>
    <property type="evidence" value="ECO:0000250"/>
    <property type="project" value="UniProtKB"/>
</dbReference>
<dbReference type="GO" id="GO:0007219">
    <property type="term" value="P:Notch signaling pathway"/>
    <property type="evidence" value="ECO:0007669"/>
    <property type="project" value="UniProtKB-KW"/>
</dbReference>
<dbReference type="GO" id="GO:0016485">
    <property type="term" value="P:protein processing"/>
    <property type="evidence" value="ECO:0007669"/>
    <property type="project" value="InterPro"/>
</dbReference>
<dbReference type="GO" id="GO:0110097">
    <property type="term" value="P:regulation of calcium import into the mitochondrion"/>
    <property type="evidence" value="ECO:0000250"/>
    <property type="project" value="UniProtKB"/>
</dbReference>
<dbReference type="FunFam" id="1.10.472.100:FF:000001">
    <property type="entry name" value="Presenilin"/>
    <property type="match status" value="1"/>
</dbReference>
<dbReference type="Gene3D" id="1.10.472.100">
    <property type="entry name" value="Presenilin"/>
    <property type="match status" value="1"/>
</dbReference>
<dbReference type="InterPro" id="IPR001493">
    <property type="entry name" value="Pept_A22A_PS2"/>
</dbReference>
<dbReference type="InterPro" id="IPR001108">
    <property type="entry name" value="Peptidase_A22A"/>
</dbReference>
<dbReference type="InterPro" id="IPR006639">
    <property type="entry name" value="Preselin/SPP"/>
</dbReference>
<dbReference type="InterPro" id="IPR042524">
    <property type="entry name" value="Presenilin_C"/>
</dbReference>
<dbReference type="PANTHER" id="PTHR10202">
    <property type="entry name" value="PRESENILIN"/>
    <property type="match status" value="1"/>
</dbReference>
<dbReference type="PANTHER" id="PTHR10202:SF24">
    <property type="entry name" value="PRESENILIN-2"/>
    <property type="match status" value="1"/>
</dbReference>
<dbReference type="Pfam" id="PF01080">
    <property type="entry name" value="Presenilin"/>
    <property type="match status" value="2"/>
</dbReference>
<dbReference type="PRINTS" id="PR01072">
    <property type="entry name" value="PRESENILIN"/>
</dbReference>
<dbReference type="PRINTS" id="PR01074">
    <property type="entry name" value="PRESENILIN2"/>
</dbReference>
<dbReference type="SMART" id="SM00730">
    <property type="entry name" value="PSN"/>
    <property type="match status" value="1"/>
</dbReference>
<organism>
    <name type="scientific">Microcebus murinus</name>
    <name type="common">Gray mouse lemur</name>
    <name type="synonym">Lemur murinus</name>
    <dbReference type="NCBI Taxonomy" id="30608"/>
    <lineage>
        <taxon>Eukaryota</taxon>
        <taxon>Metazoa</taxon>
        <taxon>Chordata</taxon>
        <taxon>Craniata</taxon>
        <taxon>Vertebrata</taxon>
        <taxon>Euteleostomi</taxon>
        <taxon>Mammalia</taxon>
        <taxon>Eutheria</taxon>
        <taxon>Euarchontoglires</taxon>
        <taxon>Primates</taxon>
        <taxon>Strepsirrhini</taxon>
        <taxon>Lemuriformes</taxon>
        <taxon>Cheirogaleidae</taxon>
        <taxon>Microcebus</taxon>
    </lineage>
</organism>
<reference key="1">
    <citation type="journal article" date="1998" name="Neurobiol. Dis.">
        <title>Cloning of the presenilin 2 cDNA and its distribution in brain of the primate, Microcebus murinus: coexpression with betaAPP and Tau proteins.</title>
        <authorList>
            <person name="Calenda A."/>
            <person name="Mestre-Frances N."/>
            <person name="Czech C."/>
            <person name="Pradier L."/>
            <person name="Petter A."/>
            <person name="Perret M."/>
            <person name="Bons N."/>
            <person name="Bellis M."/>
        </authorList>
    </citation>
    <scope>NUCLEOTIDE SEQUENCE [MRNA]</scope>
    <source>
        <tissue>Brain</tissue>
    </source>
</reference>
<proteinExistence type="evidence at transcript level"/>
<evidence type="ECO:0000250" key="1"/>
<evidence type="ECO:0000250" key="2">
    <source>
        <dbReference type="UniProtKB" id="P49810"/>
    </source>
</evidence>
<evidence type="ECO:0000250" key="3">
    <source>
        <dbReference type="UniProtKB" id="Q61144"/>
    </source>
</evidence>
<evidence type="ECO:0000255" key="4"/>
<evidence type="ECO:0000256" key="5">
    <source>
        <dbReference type="SAM" id="MobiDB-lite"/>
    </source>
</evidence>
<evidence type="ECO:0000305" key="6"/>
<protein>
    <recommendedName>
        <fullName>Presenilin-2</fullName>
        <shortName>PS-2</shortName>
        <ecNumber>3.4.23.-</ecNumber>
    </recommendedName>
    <component>
        <recommendedName>
            <fullName>Presenilin-2 NTF subunit</fullName>
        </recommendedName>
    </component>
    <component>
        <recommendedName>
            <fullName>Presenilin-2 CTF subunit</fullName>
        </recommendedName>
    </component>
</protein>
<feature type="chain" id="PRO_0000025605" description="Presenilin-2 NTF subunit" evidence="1">
    <location>
        <begin position="1"/>
        <end position="297"/>
    </location>
</feature>
<feature type="chain" id="PRO_0000025606" description="Presenilin-2 CTF subunit" evidence="1">
    <location>
        <begin position="298"/>
        <end position="445"/>
    </location>
</feature>
<feature type="topological domain" description="Cytoplasmic" evidence="4">
    <location>
        <begin position="1"/>
        <end position="87"/>
    </location>
</feature>
<feature type="transmembrane region" description="Helical" evidence="4">
    <location>
        <begin position="88"/>
        <end position="108"/>
    </location>
</feature>
<feature type="topological domain" description="Lumenal" evidence="4">
    <location>
        <begin position="109"/>
        <end position="138"/>
    </location>
</feature>
<feature type="transmembrane region" description="Helical" evidence="4">
    <location>
        <begin position="139"/>
        <end position="159"/>
    </location>
</feature>
<feature type="topological domain" description="Cytoplasmic" evidence="4">
    <location>
        <begin position="160"/>
        <end position="166"/>
    </location>
</feature>
<feature type="transmembrane region" description="Helical" evidence="4">
    <location>
        <begin position="167"/>
        <end position="187"/>
    </location>
</feature>
<feature type="topological domain" description="Lumenal" evidence="4">
    <location>
        <begin position="188"/>
        <end position="200"/>
    </location>
</feature>
<feature type="transmembrane region" description="Helical" evidence="4">
    <location>
        <begin position="201"/>
        <end position="221"/>
    </location>
</feature>
<feature type="topological domain" description="Cytoplasmic" evidence="4">
    <location>
        <begin position="222"/>
        <end position="223"/>
    </location>
</feature>
<feature type="transmembrane region" description="Helical" evidence="4">
    <location>
        <begin position="224"/>
        <end position="244"/>
    </location>
</feature>
<feature type="topological domain" description="Lumenal" evidence="4">
    <location>
        <begin position="245"/>
        <end position="249"/>
    </location>
</feature>
<feature type="transmembrane region" description="Helical" evidence="4">
    <location>
        <begin position="250"/>
        <end position="271"/>
    </location>
</feature>
<feature type="topological domain" description="Cytoplasmic" evidence="4">
    <location>
        <begin position="272"/>
        <end position="361"/>
    </location>
</feature>
<feature type="transmembrane region" description="Helical" evidence="4">
    <location>
        <begin position="362"/>
        <end position="382"/>
    </location>
</feature>
<feature type="topological domain" description="Lumenal" evidence="4">
    <location>
        <begin position="383"/>
        <end position="388"/>
    </location>
</feature>
<feature type="transmembrane region" description="Helical" evidence="4">
    <location>
        <begin position="389"/>
        <end position="409"/>
    </location>
</feature>
<feature type="topological domain" description="Cytoplasmic" evidence="4">
    <location>
        <begin position="410"/>
        <end position="413"/>
    </location>
</feature>
<feature type="intramembrane region" description="Helical" evidence="4">
    <location>
        <begin position="414"/>
        <end position="434"/>
    </location>
</feature>
<feature type="topological domain" description="Cytoplasmic" evidence="4">
    <location>
        <begin position="435"/>
        <end position="445"/>
    </location>
</feature>
<feature type="region of interest" description="Disordered" evidence="5">
    <location>
        <begin position="1"/>
        <end position="76"/>
    </location>
</feature>
<feature type="short sequence motif" description="PAL">
    <location>
        <begin position="414"/>
        <end position="416"/>
    </location>
</feature>
<feature type="compositionally biased region" description="Polar residues" evidence="5">
    <location>
        <begin position="19"/>
        <end position="30"/>
    </location>
</feature>
<feature type="active site" evidence="1">
    <location>
        <position position="263"/>
    </location>
</feature>
<feature type="active site" evidence="1">
    <location>
        <position position="366"/>
    </location>
</feature>
<feature type="modified residue" description="Phosphoserine" evidence="2">
    <location>
        <position position="22"/>
    </location>
</feature>
<feature type="modified residue" description="Phosphoserine" evidence="2">
    <location>
        <position position="25"/>
    </location>
</feature>
<feature type="modified residue" description="Phosphoserine" evidence="3">
    <location>
        <position position="30"/>
    </location>
</feature>
<feature type="modified residue" description="Phosphoserine" evidence="3">
    <location>
        <position position="52"/>
    </location>
</feature>
<feature type="non-terminal residue">
    <location>
        <position position="445"/>
    </location>
</feature>
<sequence>MLTFMASDSEEEVCDERTSLMSAESPSPRSCQEGGQGPEDGDSTAQWRIQDSEEDGEEDPDRYVSSGVPGRPPGPEEELTLKYGAKHVIMLSVPVTLCMIVVVATIKSVRFYTEKNGQLIYTPFTEDTPSVSQRLLNSVLNTLIMISVIVVMTIFLVVLYKYRCYKFIHGWLIMSSLMLLFLFTYIYLGEVLKTYNVAMDYPTLVLTVWNFGAVGMVCIHWKGPLMLQQAYLIAISALMALVFIKYLPEWSAWVILGAISVYDLVAVLCPKGPLRMLVETAQERNEPIFPALIYSSAMVWTVGMAKLDPSSQGALQLPYDPEMEEDSYDSLGEPSYPEVFEAPLPGYPGEELEEEEERGVKLGLGDFIFYSVLVGKAAATGSGDWNTTLACFVAILIGLCLTLLLLAVFKKALPALPISITFGLVFYFSTDNLVRPFMDTLAYHQ</sequence>
<name>PSN2_MICMU</name>